<proteinExistence type="inferred from homology"/>
<comment type="function">
    <text evidence="1">Involved in the gluconeogenesis. Catalyzes the conversion of oxaloacetate (OAA) to phosphoenolpyruvate (PEP) through direct phosphoryl transfer between the nucleoside triphosphate and OAA.</text>
</comment>
<comment type="catalytic activity">
    <reaction evidence="1">
        <text>oxaloacetate + ATP = phosphoenolpyruvate + ADP + CO2</text>
        <dbReference type="Rhea" id="RHEA:18617"/>
        <dbReference type="ChEBI" id="CHEBI:16452"/>
        <dbReference type="ChEBI" id="CHEBI:16526"/>
        <dbReference type="ChEBI" id="CHEBI:30616"/>
        <dbReference type="ChEBI" id="CHEBI:58702"/>
        <dbReference type="ChEBI" id="CHEBI:456216"/>
        <dbReference type="EC" id="4.1.1.49"/>
    </reaction>
</comment>
<comment type="cofactor">
    <cofactor evidence="1">
        <name>Mn(2+)</name>
        <dbReference type="ChEBI" id="CHEBI:29035"/>
    </cofactor>
    <text evidence="1">Binds 1 Mn(2+) ion per subunit.</text>
</comment>
<comment type="pathway">
    <text evidence="1">Carbohydrate biosynthesis; gluconeogenesis.</text>
</comment>
<comment type="subcellular location">
    <subcellularLocation>
        <location evidence="1">Cytoplasm</location>
    </subcellularLocation>
</comment>
<comment type="similarity">
    <text evidence="1">Belongs to the phosphoenolpyruvate carboxykinase (ATP) family.</text>
</comment>
<name>PCKA_ALLAM</name>
<keyword id="KW-0067">ATP-binding</keyword>
<keyword id="KW-0963">Cytoplasm</keyword>
<keyword id="KW-0210">Decarboxylase</keyword>
<keyword id="KW-0312">Gluconeogenesis</keyword>
<keyword id="KW-0456">Lyase</keyword>
<keyword id="KW-0464">Manganese</keyword>
<keyword id="KW-0479">Metal-binding</keyword>
<keyword id="KW-0547">Nucleotide-binding</keyword>
<keyword id="KW-1185">Reference proteome</keyword>
<dbReference type="EC" id="4.1.1.49" evidence="1"/>
<dbReference type="EMBL" id="CP000633">
    <property type="protein sequence ID" value="ACM35004.1"/>
    <property type="molecule type" value="Genomic_DNA"/>
</dbReference>
<dbReference type="RefSeq" id="WP_012654534.1">
    <property type="nucleotide sequence ID" value="NC_011989.1"/>
</dbReference>
<dbReference type="SMR" id="B9JXX4"/>
<dbReference type="STRING" id="311402.Avi_0042"/>
<dbReference type="KEGG" id="avi:Avi_0042"/>
<dbReference type="eggNOG" id="COG1866">
    <property type="taxonomic scope" value="Bacteria"/>
</dbReference>
<dbReference type="HOGENOM" id="CLU_018247_0_1_5"/>
<dbReference type="UniPathway" id="UPA00138"/>
<dbReference type="Proteomes" id="UP000001596">
    <property type="component" value="Chromosome 1"/>
</dbReference>
<dbReference type="GO" id="GO:0005829">
    <property type="term" value="C:cytosol"/>
    <property type="evidence" value="ECO:0007669"/>
    <property type="project" value="TreeGrafter"/>
</dbReference>
<dbReference type="GO" id="GO:0005524">
    <property type="term" value="F:ATP binding"/>
    <property type="evidence" value="ECO:0007669"/>
    <property type="project" value="UniProtKB-UniRule"/>
</dbReference>
<dbReference type="GO" id="GO:0046872">
    <property type="term" value="F:metal ion binding"/>
    <property type="evidence" value="ECO:0007669"/>
    <property type="project" value="UniProtKB-KW"/>
</dbReference>
<dbReference type="GO" id="GO:0004612">
    <property type="term" value="F:phosphoenolpyruvate carboxykinase (ATP) activity"/>
    <property type="evidence" value="ECO:0007669"/>
    <property type="project" value="UniProtKB-UniRule"/>
</dbReference>
<dbReference type="GO" id="GO:0006094">
    <property type="term" value="P:gluconeogenesis"/>
    <property type="evidence" value="ECO:0007669"/>
    <property type="project" value="UniProtKB-UniRule"/>
</dbReference>
<dbReference type="CDD" id="cd00484">
    <property type="entry name" value="PEPCK_ATP"/>
    <property type="match status" value="1"/>
</dbReference>
<dbReference type="Gene3D" id="3.90.228.20">
    <property type="match status" value="1"/>
</dbReference>
<dbReference type="Gene3D" id="3.40.449.10">
    <property type="entry name" value="Phosphoenolpyruvate Carboxykinase, domain 1"/>
    <property type="match status" value="1"/>
</dbReference>
<dbReference type="Gene3D" id="2.170.8.10">
    <property type="entry name" value="Phosphoenolpyruvate Carboxykinase, domain 2"/>
    <property type="match status" value="1"/>
</dbReference>
<dbReference type="HAMAP" id="MF_00453">
    <property type="entry name" value="PEPCK_ATP"/>
    <property type="match status" value="1"/>
</dbReference>
<dbReference type="InterPro" id="IPR001272">
    <property type="entry name" value="PEP_carboxykinase_ATP"/>
</dbReference>
<dbReference type="InterPro" id="IPR013035">
    <property type="entry name" value="PEP_carboxykinase_C"/>
</dbReference>
<dbReference type="InterPro" id="IPR008210">
    <property type="entry name" value="PEP_carboxykinase_N"/>
</dbReference>
<dbReference type="InterPro" id="IPR015994">
    <property type="entry name" value="PEPCK_ATP_CS"/>
</dbReference>
<dbReference type="NCBIfam" id="TIGR00224">
    <property type="entry name" value="pckA"/>
    <property type="match status" value="1"/>
</dbReference>
<dbReference type="NCBIfam" id="NF006820">
    <property type="entry name" value="PRK09344.1-2"/>
    <property type="match status" value="1"/>
</dbReference>
<dbReference type="NCBIfam" id="NF006821">
    <property type="entry name" value="PRK09344.1-3"/>
    <property type="match status" value="1"/>
</dbReference>
<dbReference type="NCBIfam" id="NF006822">
    <property type="entry name" value="PRK09344.1-4"/>
    <property type="match status" value="1"/>
</dbReference>
<dbReference type="PANTHER" id="PTHR30031:SF0">
    <property type="entry name" value="PHOSPHOENOLPYRUVATE CARBOXYKINASE (ATP)"/>
    <property type="match status" value="1"/>
</dbReference>
<dbReference type="PANTHER" id="PTHR30031">
    <property type="entry name" value="PHOSPHOENOLPYRUVATE CARBOXYKINASE ATP"/>
    <property type="match status" value="1"/>
</dbReference>
<dbReference type="Pfam" id="PF01293">
    <property type="entry name" value="PEPCK_ATP"/>
    <property type="match status" value="1"/>
</dbReference>
<dbReference type="PIRSF" id="PIRSF006294">
    <property type="entry name" value="PEP_crbxkin"/>
    <property type="match status" value="1"/>
</dbReference>
<dbReference type="SUPFAM" id="SSF68923">
    <property type="entry name" value="PEP carboxykinase N-terminal domain"/>
    <property type="match status" value="1"/>
</dbReference>
<dbReference type="SUPFAM" id="SSF53795">
    <property type="entry name" value="PEP carboxykinase-like"/>
    <property type="match status" value="1"/>
</dbReference>
<dbReference type="PROSITE" id="PS00532">
    <property type="entry name" value="PEPCK_ATP"/>
    <property type="match status" value="1"/>
</dbReference>
<accession>B9JXX4</accession>
<organism>
    <name type="scientific">Allorhizobium ampelinum (strain ATCC BAA-846 / DSM 112012 / S4)</name>
    <name type="common">Agrobacterium vitis (strain S4)</name>
    <dbReference type="NCBI Taxonomy" id="311402"/>
    <lineage>
        <taxon>Bacteria</taxon>
        <taxon>Pseudomonadati</taxon>
        <taxon>Pseudomonadota</taxon>
        <taxon>Alphaproteobacteria</taxon>
        <taxon>Hyphomicrobiales</taxon>
        <taxon>Rhizobiaceae</taxon>
        <taxon>Rhizobium/Agrobacterium group</taxon>
        <taxon>Allorhizobium</taxon>
        <taxon>Allorhizobium ampelinum</taxon>
    </lineage>
</organism>
<protein>
    <recommendedName>
        <fullName evidence="1">Phosphoenolpyruvate carboxykinase (ATP)</fullName>
        <shortName evidence="1">PCK</shortName>
        <shortName evidence="1">PEP carboxykinase</shortName>
        <shortName evidence="1">PEPCK</shortName>
        <ecNumber evidence="1">4.1.1.49</ecNumber>
    </recommendedName>
</protein>
<evidence type="ECO:0000255" key="1">
    <source>
        <dbReference type="HAMAP-Rule" id="MF_00453"/>
    </source>
</evidence>
<gene>
    <name evidence="1" type="primary">pckA</name>
    <name type="ordered locus">Avi_0042</name>
</gene>
<feature type="chain" id="PRO_1000192306" description="Phosphoenolpyruvate carboxykinase (ATP)">
    <location>
        <begin position="1"/>
        <end position="536"/>
    </location>
</feature>
<feature type="binding site" evidence="1">
    <location>
        <position position="61"/>
    </location>
    <ligand>
        <name>substrate</name>
    </ligand>
</feature>
<feature type="binding site" evidence="1">
    <location>
        <position position="195"/>
    </location>
    <ligand>
        <name>substrate</name>
    </ligand>
</feature>
<feature type="binding site" evidence="1">
    <location>
        <position position="201"/>
    </location>
    <ligand>
        <name>ATP</name>
        <dbReference type="ChEBI" id="CHEBI:30616"/>
    </ligand>
</feature>
<feature type="binding site" evidence="1">
    <location>
        <position position="201"/>
    </location>
    <ligand>
        <name>Mn(2+)</name>
        <dbReference type="ChEBI" id="CHEBI:29035"/>
    </ligand>
</feature>
<feature type="binding site" evidence="1">
    <location>
        <position position="201"/>
    </location>
    <ligand>
        <name>substrate</name>
    </ligand>
</feature>
<feature type="binding site" evidence="1">
    <location>
        <position position="220"/>
    </location>
    <ligand>
        <name>ATP</name>
        <dbReference type="ChEBI" id="CHEBI:30616"/>
    </ligand>
</feature>
<feature type="binding site" evidence="1">
    <location>
        <position position="220"/>
    </location>
    <ligand>
        <name>Mn(2+)</name>
        <dbReference type="ChEBI" id="CHEBI:29035"/>
    </ligand>
</feature>
<feature type="binding site" evidence="1">
    <location>
        <begin position="236"/>
        <end position="244"/>
    </location>
    <ligand>
        <name>ATP</name>
        <dbReference type="ChEBI" id="CHEBI:30616"/>
    </ligand>
</feature>
<feature type="binding site" evidence="1">
    <location>
        <position position="257"/>
    </location>
    <ligand>
        <name>Mn(2+)</name>
        <dbReference type="ChEBI" id="CHEBI:29035"/>
    </ligand>
</feature>
<feature type="binding site" evidence="1">
    <location>
        <position position="285"/>
    </location>
    <ligand>
        <name>ATP</name>
        <dbReference type="ChEBI" id="CHEBI:30616"/>
    </ligand>
</feature>
<feature type="binding site" evidence="1">
    <location>
        <position position="322"/>
    </location>
    <ligand>
        <name>ATP</name>
        <dbReference type="ChEBI" id="CHEBI:30616"/>
    </ligand>
</feature>
<feature type="binding site" evidence="1">
    <location>
        <position position="322"/>
    </location>
    <ligand>
        <name>substrate</name>
    </ligand>
</feature>
<feature type="binding site" evidence="1">
    <location>
        <position position="447"/>
    </location>
    <ligand>
        <name>ATP</name>
        <dbReference type="ChEBI" id="CHEBI:30616"/>
    </ligand>
</feature>
<sequence>MEELGVNNSRLGIETIGLGKAANVHYNLLPAALYEHAIRNGEAVLTADGALLAETGQHTGRSPKDKFILRDANTDSQIWWDNNKPMSKEHFDILHQDMLAHVAGKTLFVQDLIGGADAANALPTRVVTELAWHSLFIRNLLIRPERAALADFEAKFTIIDLPSFKADPARHGCRTETVIACDFTNNIVLIAGTYYAGEMKKSVFTALNYMLPAKQVMPMHCSANVGPAGDSAVFFGLSGTGKTTLSADPARTLIGDDEHGWGEDGIFNFEGGCYAKTIRLSAEAEPEIYATTKRFGTVLENVVLDENRVPDFNDGSKTENTRCAYPLNFIPNASPTGRAGHPKTIIMLTADAFGVMPPIAKLTPEQAMYHFLSGYTAKVAGTERGVTEPEATFSTCFGAPFMPRHPAEYGNLLKELIARHEVDCWLVNTGWTGGAYGVGNRMPIKATRALLTAALSGELKKVEFRTDANFGFAVPVSVEGVDTSILDPRSTWANGTDYDAQAKKLVGMFIANFEKFEAHVDSNVLDAAPVLAVAAQ</sequence>
<reference key="1">
    <citation type="journal article" date="2009" name="J. Bacteriol.">
        <title>Genome sequences of three Agrobacterium biovars help elucidate the evolution of multichromosome genomes in bacteria.</title>
        <authorList>
            <person name="Slater S.C."/>
            <person name="Goldman B.S."/>
            <person name="Goodner B."/>
            <person name="Setubal J.C."/>
            <person name="Farrand S.K."/>
            <person name="Nester E.W."/>
            <person name="Burr T.J."/>
            <person name="Banta L."/>
            <person name="Dickerman A.W."/>
            <person name="Paulsen I."/>
            <person name="Otten L."/>
            <person name="Suen G."/>
            <person name="Welch R."/>
            <person name="Almeida N.F."/>
            <person name="Arnold F."/>
            <person name="Burton O.T."/>
            <person name="Du Z."/>
            <person name="Ewing A."/>
            <person name="Godsy E."/>
            <person name="Heisel S."/>
            <person name="Houmiel K.L."/>
            <person name="Jhaveri J."/>
            <person name="Lu J."/>
            <person name="Miller N.M."/>
            <person name="Norton S."/>
            <person name="Chen Q."/>
            <person name="Phoolcharoen W."/>
            <person name="Ohlin V."/>
            <person name="Ondrusek D."/>
            <person name="Pride N."/>
            <person name="Stricklin S.L."/>
            <person name="Sun J."/>
            <person name="Wheeler C."/>
            <person name="Wilson L."/>
            <person name="Zhu H."/>
            <person name="Wood D.W."/>
        </authorList>
    </citation>
    <scope>NUCLEOTIDE SEQUENCE [LARGE SCALE GENOMIC DNA]</scope>
    <source>
        <strain>ATCC BAA-846 / DSM 112012 / S4</strain>
    </source>
</reference>